<organism>
    <name type="scientific">Sordaria macrospora (strain ATCC MYA-333 / DSM 997 / K(L3346) / K-hell)</name>
    <dbReference type="NCBI Taxonomy" id="771870"/>
    <lineage>
        <taxon>Eukaryota</taxon>
        <taxon>Fungi</taxon>
        <taxon>Dikarya</taxon>
        <taxon>Ascomycota</taxon>
        <taxon>Pezizomycotina</taxon>
        <taxon>Sordariomycetes</taxon>
        <taxon>Sordariomycetidae</taxon>
        <taxon>Sordariales</taxon>
        <taxon>Sordariaceae</taxon>
        <taxon>Sordaria</taxon>
    </lineage>
</organism>
<dbReference type="EC" id="3.4.11.9"/>
<dbReference type="EMBL" id="CABT02000020">
    <property type="protein sequence ID" value="CCC11561.1"/>
    <property type="molecule type" value="Genomic_DNA"/>
</dbReference>
<dbReference type="RefSeq" id="XP_003345316.1">
    <property type="nucleotide sequence ID" value="XM_003345268.1"/>
</dbReference>
<dbReference type="SMR" id="D1ZQL9"/>
<dbReference type="FunCoup" id="D1ZQL9">
    <property type="interactions" value="392"/>
</dbReference>
<dbReference type="STRING" id="771870.D1ZQL9"/>
<dbReference type="MEROPS" id="M24.A09"/>
<dbReference type="VEuPathDB" id="FungiDB:SMAC_04549"/>
<dbReference type="eggNOG" id="KOG2737">
    <property type="taxonomic scope" value="Eukaryota"/>
</dbReference>
<dbReference type="HOGENOM" id="CLU_017266_1_2_1"/>
<dbReference type="InParanoid" id="D1ZQL9"/>
<dbReference type="OMA" id="DAHALFF"/>
<dbReference type="OrthoDB" id="10261878at2759"/>
<dbReference type="Proteomes" id="UP000001881">
    <property type="component" value="Unassembled WGS sequence"/>
</dbReference>
<dbReference type="GO" id="GO:0030145">
    <property type="term" value="F:manganese ion binding"/>
    <property type="evidence" value="ECO:0007669"/>
    <property type="project" value="InterPro"/>
</dbReference>
<dbReference type="GO" id="GO:0070006">
    <property type="term" value="F:metalloaminopeptidase activity"/>
    <property type="evidence" value="ECO:0007669"/>
    <property type="project" value="InterPro"/>
</dbReference>
<dbReference type="GO" id="GO:0006508">
    <property type="term" value="P:proteolysis"/>
    <property type="evidence" value="ECO:0007669"/>
    <property type="project" value="UniProtKB-KW"/>
</dbReference>
<dbReference type="CDD" id="cd01087">
    <property type="entry name" value="Prolidase"/>
    <property type="match status" value="1"/>
</dbReference>
<dbReference type="FunFam" id="3.90.230.10:FF:000002">
    <property type="entry name" value="Xaa-Pro aminopeptidase 3"/>
    <property type="match status" value="1"/>
</dbReference>
<dbReference type="Gene3D" id="3.90.230.10">
    <property type="entry name" value="Creatinase/methionine aminopeptidase superfamily"/>
    <property type="match status" value="1"/>
</dbReference>
<dbReference type="Gene3D" id="3.40.350.10">
    <property type="entry name" value="Creatinase/prolidase N-terminal domain"/>
    <property type="match status" value="1"/>
</dbReference>
<dbReference type="InterPro" id="IPR007865">
    <property type="entry name" value="Aminopep_P_N"/>
</dbReference>
<dbReference type="InterPro" id="IPR029149">
    <property type="entry name" value="Creatin/AminoP/Spt16_N"/>
</dbReference>
<dbReference type="InterPro" id="IPR036005">
    <property type="entry name" value="Creatinase/aminopeptidase-like"/>
</dbReference>
<dbReference type="InterPro" id="IPR000994">
    <property type="entry name" value="Pept_M24"/>
</dbReference>
<dbReference type="InterPro" id="IPR052433">
    <property type="entry name" value="X-Pro_dipept-like"/>
</dbReference>
<dbReference type="PANTHER" id="PTHR43226">
    <property type="entry name" value="XAA-PRO AMINOPEPTIDASE 3"/>
    <property type="match status" value="1"/>
</dbReference>
<dbReference type="PANTHER" id="PTHR43226:SF1">
    <property type="entry name" value="XAA-PRO DIPEPTIDASE"/>
    <property type="match status" value="1"/>
</dbReference>
<dbReference type="Pfam" id="PF05195">
    <property type="entry name" value="AMP_N"/>
    <property type="match status" value="1"/>
</dbReference>
<dbReference type="Pfam" id="PF00557">
    <property type="entry name" value="Peptidase_M24"/>
    <property type="match status" value="1"/>
</dbReference>
<dbReference type="SMART" id="SM01011">
    <property type="entry name" value="AMP_N"/>
    <property type="match status" value="1"/>
</dbReference>
<dbReference type="SUPFAM" id="SSF55920">
    <property type="entry name" value="Creatinase/aminopeptidase"/>
    <property type="match status" value="1"/>
</dbReference>
<dbReference type="SUPFAM" id="SSF53092">
    <property type="entry name" value="Creatinase/prolidase N-terminal domain"/>
    <property type="match status" value="1"/>
</dbReference>
<comment type="function">
    <text evidence="1">Catalyzes the removal of a penultimate prolyl residue from the N-termini of peptides.</text>
</comment>
<comment type="catalytic activity">
    <reaction>
        <text>Release of any N-terminal amino acid, including proline, that is linked to proline, even from a dipeptide or tripeptide.</text>
        <dbReference type="EC" id="3.4.11.9"/>
    </reaction>
</comment>
<comment type="cofactor">
    <cofactor evidence="1">
        <name>Mn(2+)</name>
        <dbReference type="ChEBI" id="CHEBI:29035"/>
    </cofactor>
    <text evidence="1">Binds 2 manganese ions per subunit.</text>
</comment>
<comment type="similarity">
    <text evidence="2">Belongs to the peptidase M24B family.</text>
</comment>
<feature type="chain" id="PRO_0000411852" description="Probable Xaa-Pro aminopeptidase SMAC_04549">
    <location>
        <begin position="1"/>
        <end position="467"/>
    </location>
</feature>
<feature type="binding site" evidence="1">
    <location>
        <position position="263"/>
    </location>
    <ligand>
        <name>Mn(2+)</name>
        <dbReference type="ChEBI" id="CHEBI:29035"/>
        <label>2</label>
    </ligand>
</feature>
<feature type="binding site" evidence="1">
    <location>
        <position position="274"/>
    </location>
    <ligand>
        <name>Mn(2+)</name>
        <dbReference type="ChEBI" id="CHEBI:29035"/>
        <label>1</label>
    </ligand>
</feature>
<feature type="binding site" evidence="1">
    <location>
        <position position="274"/>
    </location>
    <ligand>
        <name>Mn(2+)</name>
        <dbReference type="ChEBI" id="CHEBI:29035"/>
        <label>2</label>
    </ligand>
</feature>
<feature type="binding site" evidence="1">
    <location>
        <position position="397"/>
    </location>
    <ligand>
        <name>Mn(2+)</name>
        <dbReference type="ChEBI" id="CHEBI:29035"/>
        <label>1</label>
    </ligand>
</feature>
<feature type="binding site" evidence="1">
    <location>
        <position position="437"/>
    </location>
    <ligand>
        <name>Mn(2+)</name>
        <dbReference type="ChEBI" id="CHEBI:29035"/>
        <label>1</label>
    </ligand>
</feature>
<feature type="binding site" evidence="1">
    <location>
        <position position="437"/>
    </location>
    <ligand>
        <name>Mn(2+)</name>
        <dbReference type="ChEBI" id="CHEBI:29035"/>
        <label>2</label>
    </ligand>
</feature>
<keyword id="KW-0031">Aminopeptidase</keyword>
<keyword id="KW-0378">Hydrolase</keyword>
<keyword id="KW-0464">Manganese</keyword>
<keyword id="KW-0479">Metal-binding</keyword>
<keyword id="KW-0482">Metalloprotease</keyword>
<keyword id="KW-0645">Protease</keyword>
<keyword id="KW-1185">Reference proteome</keyword>
<name>AMPP2_SORMK</name>
<gene>
    <name type="ORF">SMAC_04549</name>
</gene>
<reference key="1">
    <citation type="journal article" date="2010" name="PLoS Genet.">
        <title>De novo assembly of a 40 Mb eukaryotic genome from short sequence reads: Sordaria macrospora, a model organism for fungal morphogenesis.</title>
        <authorList>
            <person name="Nowrousian M."/>
            <person name="Stajich J.E."/>
            <person name="Chu M."/>
            <person name="Engh I."/>
            <person name="Espagne E."/>
            <person name="Halliday K."/>
            <person name="Kamerewerd J."/>
            <person name="Kempken F."/>
            <person name="Knab B."/>
            <person name="Kuo H.-C."/>
            <person name="Osiewacz H.D."/>
            <person name="Poeggeler S."/>
            <person name="Read N.D."/>
            <person name="Seiler S."/>
            <person name="Smith K.M."/>
            <person name="Zickler D."/>
            <person name="Kueck U."/>
            <person name="Freitag M."/>
        </authorList>
    </citation>
    <scope>NUCLEOTIDE SEQUENCE [LARGE SCALE GENOMIC DNA]</scope>
    <source>
        <strain>ATCC MYA-333 / DSM 997 / K(L3346) / K-hell</strain>
    </source>
</reference>
<sequence>MTTTTRMDYETTLKGKYPAKRHAQRVADYIRNKVPGASGVLYLEGRATKLLEDNDEAEPFRQRRYFYYLTGCPLADCHYMYDIDADKSTLFIPPIDPESVIWSGLPVSADEAKQNWDVDEVKYTSDVNATLAHVGSEKPKGASVFAIPNQVSDKITFLEFDNKNFSILKEAIEVTRVVKDEYELAIMAKANEISSDGHKAVMQKVKHVQNERELEAVFLGHCIAKGSRNQAYHSIVASGRAAATLHYVPNNADMAGKLNLLLDAGGEWDCYASDITRTFPINGKFTKESREVYDIVLKMQNDCIAALKEGVLWDDVHLLAHKIAIDGLLQIGILQGDKDEILESRTSVAFFPHGLGHYLGMDTHDTGGNPNYADKDTMFRYLRVRGRLPAGSVITVEPGIYFCNFIIEPFLKDPKHSKYINADVLEKYWDVGGVRIEDNLVITKDGTYNLTTAPKDPEEMEKIIQQS</sequence>
<protein>
    <recommendedName>
        <fullName>Probable Xaa-Pro aminopeptidase SMAC_04549</fullName>
        <ecNumber>3.4.11.9</ecNumber>
    </recommendedName>
    <alternativeName>
        <fullName>Aminoacylproline aminopeptidase</fullName>
    </alternativeName>
    <alternativeName>
        <fullName>Prolidase</fullName>
    </alternativeName>
</protein>
<proteinExistence type="inferred from homology"/>
<accession>D1ZQL9</accession>
<accession>F7W1S6</accession>
<evidence type="ECO:0000250" key="1"/>
<evidence type="ECO:0000305" key="2"/>